<feature type="chain" id="PRO_0000077539" description="Divinyl chlorophyll a/b light-harvesting protein PcbB">
    <location>
        <begin position="1"/>
        <end position="349"/>
    </location>
</feature>
<feature type="transmembrane region" description="Helical" evidence="3">
    <location>
        <begin position="27"/>
        <end position="47"/>
    </location>
</feature>
<feature type="transmembrane region" description="Helical" evidence="3">
    <location>
        <begin position="57"/>
        <end position="77"/>
    </location>
</feature>
<feature type="transmembrane region" description="Helical" evidence="3">
    <location>
        <begin position="91"/>
        <end position="113"/>
    </location>
</feature>
<feature type="transmembrane region" description="Helical" evidence="3">
    <location>
        <begin position="201"/>
        <end position="221"/>
    </location>
</feature>
<feature type="transmembrane region" description="Helical" evidence="3">
    <location>
        <begin position="241"/>
        <end position="261"/>
    </location>
</feature>
<feature type="transmembrane region" description="Helical" evidence="3">
    <location>
        <begin position="306"/>
        <end position="326"/>
    </location>
</feature>
<gene>
    <name type="primary">pcbB</name>
    <name type="ordered locus">Pro_1169</name>
</gene>
<proteinExistence type="evidence at protein level"/>
<sequence length="349" mass="38298">MQTYGNPNVTYGWWAGNSGVTNRSGKFIAAHAAHTGLIAFGCGAATLVELAGFDPSLPMGHQSSLFLAHLASVGIGFDDAGVWTGVGVANIAILHLILSMVYGGGGLLHSVYFTGDMQDSQVPQARKFKLEWDNPDNQTFILGHHLLFFGVANIWFVEWARIHGIYDPAIEAIRQVNYNLDLTQIWNHQFDFLAIDSLEDVMGGHAFLAFFQLGGGAFHIATKQIGTYTKFKGKELLSAEAILSWSLAGIGWMACVAAFWAATNTTVYPEAWYGEVLQIKFGVSPYWIDTVPGGTAFLGHTTRAALVNVHYYLGFFFIQGHLWHALRAMGFDFKRLLDKTGPFGIPRTL</sequence>
<evidence type="ECO:0000250" key="1"/>
<evidence type="ECO:0000250" key="2">
    <source>
        <dbReference type="UniProtKB" id="Q6Q972"/>
    </source>
</evidence>
<evidence type="ECO:0000255" key="3"/>
<evidence type="ECO:0000269" key="4">
    <source>
    </source>
</evidence>
<evidence type="ECO:0000269" key="5">
    <source>
    </source>
</evidence>
<evidence type="ECO:0000269" key="6">
    <source ref="3"/>
</evidence>
<evidence type="ECO:0000303" key="7">
    <source>
    </source>
</evidence>
<evidence type="ECO:0000303" key="8">
    <source>
    </source>
</evidence>
<evidence type="ECO:0000303" key="9">
    <source>
    </source>
</evidence>
<evidence type="ECO:0000303" key="10">
    <source ref="3"/>
</evidence>
<evidence type="ECO:0000305" key="11"/>
<comment type="function">
    <text evidence="2 7 10">The antenna complex functions as a light receptor, it captures and delivers excitation energy to photosystems II and I. The Prochlorales pcb genes are not related to higher plant LHCs.</text>
</comment>
<comment type="cofactor">
    <cofactor evidence="10">
        <name>divinyl chlorophyll a</name>
        <dbReference type="ChEBI" id="CHEBI:73095"/>
    </cofactor>
</comment>
<comment type="cofactor">
    <cofactor evidence="10">
        <name>divinyl chlorophyll b</name>
        <dbReference type="ChEBI" id="CHEBI:73096"/>
    </cofactor>
</comment>
<comment type="subunit">
    <text evidence="6">The antenna complex consists of divinyl chlorophylls (a and b) and divinyl chlorophyll a/b binding proteins and binds more divinyl chlorophyll b than does the antenna complex from high-light-adapted Prochlorococcus.</text>
</comment>
<comment type="subcellular location">
    <subcellularLocation>
        <location evidence="6">Cellular thylakoid membrane</location>
        <topology evidence="1">Multi-pass membrane protein</topology>
    </subcellularLocation>
</comment>
<comment type="induction">
    <text evidence="4 5">This transcript is moderately expressed between 4.5 and 72 umol blue light/m2/s. The whole antenna complex is most highly expressed under low light; as the light levels increase antenna complex levels decrease. Thus at least in this strain the amount of antenna complex is controlled mostly at a post-transcriptional level. Transcription decreases slightly upon iron starvation.</text>
</comment>
<comment type="miscellaneous">
    <text evidence="8 9">This low-light-adapted strain contains 8 pcb genes.</text>
</comment>
<comment type="similarity">
    <text evidence="11">Belongs to the PsbB/PsbC family. IsiA/Pcb subfamily.</text>
</comment>
<protein>
    <recommendedName>
        <fullName>Divinyl chlorophyll a/b light-harvesting protein PcbB</fullName>
    </recommendedName>
</protein>
<name>PCBB_PROMA</name>
<reference key="1">
    <citation type="journal article" date="2000" name="Proc. Natl. Acad. Sci. U.S.A.">
        <title>Multiplication of antenna genes as a major adaptation to low light in a marine prokaryote.</title>
        <authorList>
            <person name="Garczarek L."/>
            <person name="Hess W.R."/>
            <person name="Holtzendorff J."/>
            <person name="van der Staay G.W.M."/>
            <person name="Partensky F."/>
        </authorList>
    </citation>
    <scope>NUCLEOTIDE SEQUENCE [GENOMIC DNA]</scope>
    <scope>FUNCTION</scope>
    <source>
        <strain>SARG / CCMP1375 / SS120</strain>
    </source>
</reference>
<reference key="2">
    <citation type="journal article" date="2003" name="Proc. Natl. Acad. Sci. U.S.A.">
        <title>Genome sequence of the cyanobacterium Prochlorococcus marinus SS120, a nearly minimal oxyphototrophic genome.</title>
        <authorList>
            <person name="Dufresne A."/>
            <person name="Salanoubat M."/>
            <person name="Partensky F."/>
            <person name="Artiguenave F."/>
            <person name="Axmann I.M."/>
            <person name="Barbe V."/>
            <person name="Duprat S."/>
            <person name="Galperin M.Y."/>
            <person name="Koonin E.V."/>
            <person name="Le Gall F."/>
            <person name="Makarova K.S."/>
            <person name="Ostrowski M."/>
            <person name="Oztas S."/>
            <person name="Robert C."/>
            <person name="Rogozin I.B."/>
            <person name="Scanlan D.J."/>
            <person name="Tandeau de Marsac N."/>
            <person name="Weissenbach J."/>
            <person name="Wincker P."/>
            <person name="Wolf Y.I."/>
            <person name="Hess W.R."/>
        </authorList>
    </citation>
    <scope>NUCLEOTIDE SEQUENCE [LARGE SCALE GENOMIC DNA]</scope>
    <source>
        <strain>SARG / CCMP1375 / SS120</strain>
    </source>
</reference>
<reference key="3">
    <citation type="journal article" date="1997" name="Photosyn. Res.">
        <title>The divinyl-chlorophyll a/b-protein complexes of two strains of the oxyphototrophic marine prokaryote Prochlorococcus -- characterization and response to changes in growth irradiance.</title>
        <authorList>
            <person name="Partensky F."/>
            <person name="La Roche J."/>
            <person name="Wyman K."/>
            <person name="Falkowski P.G."/>
        </authorList>
    </citation>
    <scope>FUNCTION</scope>
    <scope>COFACTOR</scope>
    <scope>SUBUNIT</scope>
    <scope>SUBCELLULAR LOCATION</scope>
    <source>
        <strain>SARG / CCMP1375 / SS120</strain>
    </source>
</reference>
<reference key="4">
    <citation type="journal article" date="2001" name="Plant Mol. Biol.">
        <title>Expression and phylogeny of the multiple antenna genes of the low-light-adapted strain Prochlorococcus marinus SS120 (Oxyphotobacteria).</title>
        <authorList>
            <person name="Garczarek L."/>
            <person name="van der Staay G.W.M."/>
            <person name="Hess W.R."/>
            <person name="Le Gall F."/>
            <person name="Partensky F."/>
        </authorList>
    </citation>
    <scope>INDUCTION</scope>
    <source>
        <strain>SARG / CCMP1375 / SS120</strain>
    </source>
</reference>
<reference key="5">
    <citation type="journal article" date="2003" name="Nature">
        <title>Low-light-adapted Prochlorococcus species possess specific antennae for each photosystem.</title>
        <authorList>
            <person name="Bibby T.S."/>
            <person name="Mary I."/>
            <person name="Nield J."/>
            <person name="Partensky F."/>
            <person name="Barber J."/>
        </authorList>
    </citation>
    <scope>REPRESSION UNDER IRON-STARVATION</scope>
    <source>
        <strain>SARG / CCMP1375 / SS120</strain>
    </source>
</reference>
<dbReference type="EMBL" id="AF198526">
    <property type="protein sequence ID" value="AAF61301.1"/>
    <property type="molecule type" value="Genomic_DNA"/>
</dbReference>
<dbReference type="EMBL" id="AE017126">
    <property type="protein sequence ID" value="AAQ00214.1"/>
    <property type="molecule type" value="Genomic_DNA"/>
</dbReference>
<dbReference type="RefSeq" id="NP_875561.1">
    <property type="nucleotide sequence ID" value="NC_005042.1"/>
</dbReference>
<dbReference type="RefSeq" id="WP_011125321.1">
    <property type="nucleotide sequence ID" value="NC_005042.1"/>
</dbReference>
<dbReference type="SMR" id="Q9L8M5"/>
<dbReference type="STRING" id="167539.Pro_1169"/>
<dbReference type="EnsemblBacteria" id="AAQ00214">
    <property type="protein sequence ID" value="AAQ00214"/>
    <property type="gene ID" value="Pro_1169"/>
</dbReference>
<dbReference type="KEGG" id="pma:Pro_1169"/>
<dbReference type="PATRIC" id="fig|167539.5.peg.1223"/>
<dbReference type="eggNOG" id="ENOG503217K">
    <property type="taxonomic scope" value="Bacteria"/>
</dbReference>
<dbReference type="HOGENOM" id="CLU_028310_0_0_3"/>
<dbReference type="OrthoDB" id="9429529at2"/>
<dbReference type="Proteomes" id="UP000001420">
    <property type="component" value="Chromosome"/>
</dbReference>
<dbReference type="GO" id="GO:0009522">
    <property type="term" value="C:photosystem I"/>
    <property type="evidence" value="ECO:0007669"/>
    <property type="project" value="UniProtKB-KW"/>
</dbReference>
<dbReference type="GO" id="GO:0009523">
    <property type="term" value="C:photosystem II"/>
    <property type="evidence" value="ECO:0007669"/>
    <property type="project" value="UniProtKB-KW"/>
</dbReference>
<dbReference type="GO" id="GO:0031676">
    <property type="term" value="C:plasma membrane-derived thylakoid membrane"/>
    <property type="evidence" value="ECO:0007669"/>
    <property type="project" value="UniProtKB-SubCell"/>
</dbReference>
<dbReference type="GO" id="GO:0016168">
    <property type="term" value="F:chlorophyll binding"/>
    <property type="evidence" value="ECO:0007669"/>
    <property type="project" value="UniProtKB-KW"/>
</dbReference>
<dbReference type="GO" id="GO:0009767">
    <property type="term" value="P:photosynthetic electron transport chain"/>
    <property type="evidence" value="ECO:0007669"/>
    <property type="project" value="InterPro"/>
</dbReference>
<dbReference type="InterPro" id="IPR000932">
    <property type="entry name" value="PS_antenna-like"/>
</dbReference>
<dbReference type="InterPro" id="IPR036001">
    <property type="entry name" value="PS_II_antenna-like_sf"/>
</dbReference>
<dbReference type="NCBIfam" id="TIGR03041">
    <property type="entry name" value="PS_antenn_a_b"/>
    <property type="match status" value="1"/>
</dbReference>
<dbReference type="Pfam" id="PF00421">
    <property type="entry name" value="PSII"/>
    <property type="match status" value="1"/>
</dbReference>
<dbReference type="SUPFAM" id="SSF161077">
    <property type="entry name" value="Photosystem II antenna protein-like"/>
    <property type="match status" value="1"/>
</dbReference>
<accession>Q9L8M5</accession>
<accession>Q7BWI0</accession>
<organism>
    <name type="scientific">Prochlorococcus marinus (strain SARG / CCMP1375 / SS120)</name>
    <dbReference type="NCBI Taxonomy" id="167539"/>
    <lineage>
        <taxon>Bacteria</taxon>
        <taxon>Bacillati</taxon>
        <taxon>Cyanobacteriota</taxon>
        <taxon>Cyanophyceae</taxon>
        <taxon>Synechococcales</taxon>
        <taxon>Prochlorococcaceae</taxon>
        <taxon>Prochlorococcus</taxon>
    </lineage>
</organism>
<keyword id="KW-0148">Chlorophyll</keyword>
<keyword id="KW-0157">Chromophore</keyword>
<keyword id="KW-0472">Membrane</keyword>
<keyword id="KW-0602">Photosynthesis</keyword>
<keyword id="KW-0603">Photosystem I</keyword>
<keyword id="KW-0604">Photosystem II</keyword>
<keyword id="KW-1185">Reference proteome</keyword>
<keyword id="KW-0793">Thylakoid</keyword>
<keyword id="KW-0812">Transmembrane</keyword>
<keyword id="KW-1133">Transmembrane helix</keyword>